<gene>
    <name type="primary">TKL2</name>
    <name type="ordered locus">YBR117C</name>
    <name type="ORF">YBR0912</name>
</gene>
<proteinExistence type="evidence at protein level"/>
<sequence>MAQFSDIDKLAVSTLRLLSVDQVESAQSGHPGAPLGLAPVAHVIFKQLRCNPNNEHWINRDRFVLSNGHSCALLYSMLHLLGYDYSIEDLRQFRQVNSRTPGHPEFHSAGVEITSGPLGQGISNAVGMAIAQANFAATYNEDGFPISDSYTFAIVGDGCLQEGVSSETSSLAGHLQLGNLITFYDSNSISIDGKTSYSFDEDVLKRYEAYGWEVMEVDKGDDDMESISSALEKAKLSKDKPTIIKVTTTIGFGSLQQGTAGVHGSALKADDVKQLKKRWGFDPNKSFVVPQEVYDYYKKTVVEPGQKLNEEWDRMFEEYKTKFPEKGKELQRRLNGELPEGWEKHLPKFTPDDDALATRKTSQQVLTNMVQVLPELIGGSADLTPSNLTRWEGAVDFQPPITQLGNYAGRYIRYGVREHGMGAIMNGISAFGANYKPYGGTFLNFVSYAAGAVRLAALSGNPVIWVATHDSIGLGEDGPTHQPIETLAHLRAIPNMHVWRPADGNETSAAYYSAIKSGRTPSVVALSRQNLPQLEHSSFEKALKGGYVIHDVENPDIILVSTGSEVSISIDAAKKLYDTKKIKARVVSLPDFYTFDRQSEEYRFSVLPDGVPIMSFEVLATSSWGKYAHQSFGLDEFGRSGKGPEIYKLFDFTADGVASRAEKTINYYKGKQLLSPMGRAF</sequence>
<dbReference type="EC" id="2.2.1.1"/>
<dbReference type="EMBL" id="X73532">
    <property type="protein sequence ID" value="CAA51937.1"/>
    <property type="molecule type" value="Genomic_DNA"/>
</dbReference>
<dbReference type="EMBL" id="X78993">
    <property type="protein sequence ID" value="CAA55619.1"/>
    <property type="molecule type" value="Genomic_DNA"/>
</dbReference>
<dbReference type="EMBL" id="Z35985">
    <property type="protein sequence ID" value="CAA85074.1"/>
    <property type="molecule type" value="Genomic_DNA"/>
</dbReference>
<dbReference type="EMBL" id="BK006936">
    <property type="protein sequence ID" value="DAA07235.1"/>
    <property type="molecule type" value="Genomic_DNA"/>
</dbReference>
<dbReference type="PIR" id="S37809">
    <property type="entry name" value="S37809"/>
</dbReference>
<dbReference type="RefSeq" id="NP_009675.3">
    <property type="nucleotide sequence ID" value="NM_001178465.3"/>
</dbReference>
<dbReference type="SMR" id="P33315"/>
<dbReference type="BioGRID" id="32819">
    <property type="interactions" value="86"/>
</dbReference>
<dbReference type="DIP" id="DIP-757N"/>
<dbReference type="FunCoup" id="P33315">
    <property type="interactions" value="851"/>
</dbReference>
<dbReference type="IntAct" id="P33315">
    <property type="interactions" value="3"/>
</dbReference>
<dbReference type="MINT" id="P33315"/>
<dbReference type="STRING" id="4932.YBR117C"/>
<dbReference type="iPTMnet" id="P33315"/>
<dbReference type="PaxDb" id="4932-YBR117C"/>
<dbReference type="PeptideAtlas" id="P33315"/>
<dbReference type="TopDownProteomics" id="P33315"/>
<dbReference type="EnsemblFungi" id="YBR117C_mRNA">
    <property type="protein sequence ID" value="YBR117C"/>
    <property type="gene ID" value="YBR117C"/>
</dbReference>
<dbReference type="GeneID" id="852414"/>
<dbReference type="KEGG" id="sce:YBR117C"/>
<dbReference type="AGR" id="SGD:S000000321"/>
<dbReference type="SGD" id="S000000321">
    <property type="gene designation" value="TKL2"/>
</dbReference>
<dbReference type="VEuPathDB" id="FungiDB:YBR117C"/>
<dbReference type="eggNOG" id="KOG0523">
    <property type="taxonomic scope" value="Eukaryota"/>
</dbReference>
<dbReference type="GeneTree" id="ENSGT00940000176704"/>
<dbReference type="HOGENOM" id="CLU_009227_0_0_1"/>
<dbReference type="InParanoid" id="P33315"/>
<dbReference type="OMA" id="VYCLCGD"/>
<dbReference type="OrthoDB" id="10267175at2759"/>
<dbReference type="BioCyc" id="YEAST:YBR117C-MONOMER"/>
<dbReference type="BRENDA" id="2.2.1.1">
    <property type="organism ID" value="984"/>
</dbReference>
<dbReference type="SABIO-RK" id="P33315"/>
<dbReference type="BioGRID-ORCS" id="852414">
    <property type="hits" value="2 hits in 10 CRISPR screens"/>
</dbReference>
<dbReference type="PRO" id="PR:P33315"/>
<dbReference type="Proteomes" id="UP000002311">
    <property type="component" value="Chromosome II"/>
</dbReference>
<dbReference type="RNAct" id="P33315">
    <property type="molecule type" value="protein"/>
</dbReference>
<dbReference type="GO" id="GO:0005737">
    <property type="term" value="C:cytoplasm"/>
    <property type="evidence" value="ECO:0007005"/>
    <property type="project" value="SGD"/>
</dbReference>
<dbReference type="GO" id="GO:0005829">
    <property type="term" value="C:cytosol"/>
    <property type="evidence" value="ECO:0000318"/>
    <property type="project" value="GO_Central"/>
</dbReference>
<dbReference type="GO" id="GO:0005634">
    <property type="term" value="C:nucleus"/>
    <property type="evidence" value="ECO:0007005"/>
    <property type="project" value="SGD"/>
</dbReference>
<dbReference type="GO" id="GO:0046872">
    <property type="term" value="F:metal ion binding"/>
    <property type="evidence" value="ECO:0007669"/>
    <property type="project" value="UniProtKB-KW"/>
</dbReference>
<dbReference type="GO" id="GO:0004802">
    <property type="term" value="F:transketolase activity"/>
    <property type="evidence" value="ECO:0000250"/>
    <property type="project" value="SGD"/>
</dbReference>
<dbReference type="GO" id="GO:0006098">
    <property type="term" value="P:pentose-phosphate shunt"/>
    <property type="evidence" value="ECO:0000315"/>
    <property type="project" value="SGD"/>
</dbReference>
<dbReference type="CDD" id="cd07033">
    <property type="entry name" value="TPP_PYR_DXS_TK_like"/>
    <property type="match status" value="1"/>
</dbReference>
<dbReference type="CDD" id="cd02012">
    <property type="entry name" value="TPP_TK"/>
    <property type="match status" value="1"/>
</dbReference>
<dbReference type="FunFam" id="3.40.50.920:FF:000003">
    <property type="entry name" value="Transketolase"/>
    <property type="match status" value="1"/>
</dbReference>
<dbReference type="FunFam" id="3.40.50.970:FF:000003">
    <property type="entry name" value="Transketolase"/>
    <property type="match status" value="1"/>
</dbReference>
<dbReference type="FunFam" id="3.40.50.970:FF:000004">
    <property type="entry name" value="Transketolase"/>
    <property type="match status" value="1"/>
</dbReference>
<dbReference type="Gene3D" id="3.40.50.920">
    <property type="match status" value="1"/>
</dbReference>
<dbReference type="Gene3D" id="3.40.50.970">
    <property type="match status" value="2"/>
</dbReference>
<dbReference type="InterPro" id="IPR029061">
    <property type="entry name" value="THDP-binding"/>
</dbReference>
<dbReference type="InterPro" id="IPR009014">
    <property type="entry name" value="Transketo_C/PFOR_II"/>
</dbReference>
<dbReference type="InterPro" id="IPR055152">
    <property type="entry name" value="Transketolase-like_C_2"/>
</dbReference>
<dbReference type="InterPro" id="IPR005475">
    <property type="entry name" value="Transketolase-like_Pyr-bd"/>
</dbReference>
<dbReference type="InterPro" id="IPR005478">
    <property type="entry name" value="Transketolase_bac-like"/>
</dbReference>
<dbReference type="InterPro" id="IPR020826">
    <property type="entry name" value="Transketolase_BS"/>
</dbReference>
<dbReference type="InterPro" id="IPR049557">
    <property type="entry name" value="Transketolase_CS"/>
</dbReference>
<dbReference type="InterPro" id="IPR033247">
    <property type="entry name" value="Transketolase_fam"/>
</dbReference>
<dbReference type="InterPro" id="IPR005474">
    <property type="entry name" value="Transketolase_N"/>
</dbReference>
<dbReference type="NCBIfam" id="TIGR00232">
    <property type="entry name" value="tktlase_bact"/>
    <property type="match status" value="1"/>
</dbReference>
<dbReference type="PANTHER" id="PTHR43522">
    <property type="entry name" value="TRANSKETOLASE"/>
    <property type="match status" value="1"/>
</dbReference>
<dbReference type="PANTHER" id="PTHR43522:SF2">
    <property type="entry name" value="TRANSKETOLASE 1-RELATED"/>
    <property type="match status" value="1"/>
</dbReference>
<dbReference type="Pfam" id="PF02779">
    <property type="entry name" value="Transket_pyr"/>
    <property type="match status" value="1"/>
</dbReference>
<dbReference type="Pfam" id="PF22613">
    <property type="entry name" value="Transketolase_C_1"/>
    <property type="match status" value="1"/>
</dbReference>
<dbReference type="Pfam" id="PF00456">
    <property type="entry name" value="Transketolase_N"/>
    <property type="match status" value="1"/>
</dbReference>
<dbReference type="SMART" id="SM00861">
    <property type="entry name" value="Transket_pyr"/>
    <property type="match status" value="1"/>
</dbReference>
<dbReference type="SUPFAM" id="SSF52518">
    <property type="entry name" value="Thiamin diphosphate-binding fold (THDP-binding)"/>
    <property type="match status" value="2"/>
</dbReference>
<dbReference type="SUPFAM" id="SSF52922">
    <property type="entry name" value="TK C-terminal domain-like"/>
    <property type="match status" value="1"/>
</dbReference>
<dbReference type="PROSITE" id="PS00801">
    <property type="entry name" value="TRANSKETOLASE_1"/>
    <property type="match status" value="1"/>
</dbReference>
<dbReference type="PROSITE" id="PS00802">
    <property type="entry name" value="TRANSKETOLASE_2"/>
    <property type="match status" value="1"/>
</dbReference>
<protein>
    <recommendedName>
        <fullName>Transketolase 2</fullName>
        <shortName>TK 2</shortName>
        <ecNumber>2.2.1.1</ecNumber>
    </recommendedName>
</protein>
<keyword id="KW-0106">Calcium</keyword>
<keyword id="KW-0460">Magnesium</keyword>
<keyword id="KW-0479">Metal-binding</keyword>
<keyword id="KW-1185">Reference proteome</keyword>
<keyword id="KW-0786">Thiamine pyrophosphate</keyword>
<keyword id="KW-0808">Transferase</keyword>
<accession>P33315</accession>
<accession>D6VQB5</accession>
<reference key="1">
    <citation type="journal article" date="1993" name="Eur. J. Biochem.">
        <title>TKL2, a second transketolase gene of Saccharomyces cerevisiae. Cloning, sequence and deletion analysis of the gene.</title>
        <authorList>
            <person name="Schaaff-Gerstenschlaeger I."/>
            <person name="Mannhaupt G."/>
            <person name="Vetter I."/>
            <person name="Zimmermann F.K."/>
            <person name="Feldmann H."/>
        </authorList>
    </citation>
    <scope>NUCLEOTIDE SEQUENCE [GENOMIC DNA]</scope>
    <source>
        <strain>ATCC 204508 / S288c</strain>
    </source>
</reference>
<reference key="2">
    <citation type="journal article" date="1994" name="Yeast">
        <title>Analysis of a 70 kb region on the right arm of yeast chromosome II.</title>
        <authorList>
            <person name="Mannhaupt G."/>
            <person name="Stucka R."/>
            <person name="Ehnle S."/>
            <person name="Vetter I."/>
            <person name="Feldmann H."/>
        </authorList>
    </citation>
    <scope>NUCLEOTIDE SEQUENCE [GENOMIC DNA]</scope>
    <source>
        <strain>ATCC 204508 / S288c</strain>
    </source>
</reference>
<reference key="3">
    <citation type="journal article" date="1994" name="EMBO J.">
        <title>Complete DNA sequence of yeast chromosome II.</title>
        <authorList>
            <person name="Feldmann H."/>
            <person name="Aigle M."/>
            <person name="Aljinovic G."/>
            <person name="Andre B."/>
            <person name="Baclet M.C."/>
            <person name="Barthe C."/>
            <person name="Baur A."/>
            <person name="Becam A.-M."/>
            <person name="Biteau N."/>
            <person name="Boles E."/>
            <person name="Brandt T."/>
            <person name="Brendel M."/>
            <person name="Brueckner M."/>
            <person name="Bussereau F."/>
            <person name="Christiansen C."/>
            <person name="Contreras R."/>
            <person name="Crouzet M."/>
            <person name="Cziepluch C."/>
            <person name="Demolis N."/>
            <person name="Delaveau T."/>
            <person name="Doignon F."/>
            <person name="Domdey H."/>
            <person name="Duesterhus S."/>
            <person name="Dubois E."/>
            <person name="Dujon B."/>
            <person name="El Bakkoury M."/>
            <person name="Entian K.-D."/>
            <person name="Feuermann M."/>
            <person name="Fiers W."/>
            <person name="Fobo G.M."/>
            <person name="Fritz C."/>
            <person name="Gassenhuber J."/>
            <person name="Glansdorff N."/>
            <person name="Goffeau A."/>
            <person name="Grivell L.A."/>
            <person name="de Haan M."/>
            <person name="Hein C."/>
            <person name="Herbert C.J."/>
            <person name="Hollenberg C.P."/>
            <person name="Holmstroem K."/>
            <person name="Jacq C."/>
            <person name="Jacquet M."/>
            <person name="Jauniaux J.-C."/>
            <person name="Jonniaux J.-L."/>
            <person name="Kallesoee T."/>
            <person name="Kiesau P."/>
            <person name="Kirchrath L."/>
            <person name="Koetter P."/>
            <person name="Korol S."/>
            <person name="Liebl S."/>
            <person name="Logghe M."/>
            <person name="Lohan A.J.E."/>
            <person name="Louis E.J."/>
            <person name="Li Z.Y."/>
            <person name="Maat M.J."/>
            <person name="Mallet L."/>
            <person name="Mannhaupt G."/>
            <person name="Messenguy F."/>
            <person name="Miosga T."/>
            <person name="Molemans F."/>
            <person name="Mueller S."/>
            <person name="Nasr F."/>
            <person name="Obermaier B."/>
            <person name="Perea J."/>
            <person name="Pierard A."/>
            <person name="Piravandi E."/>
            <person name="Pohl F.M."/>
            <person name="Pohl T.M."/>
            <person name="Potier S."/>
            <person name="Proft M."/>
            <person name="Purnelle B."/>
            <person name="Ramezani Rad M."/>
            <person name="Rieger M."/>
            <person name="Rose M."/>
            <person name="Schaaff-Gerstenschlaeger I."/>
            <person name="Scherens B."/>
            <person name="Schwarzlose C."/>
            <person name="Skala J."/>
            <person name="Slonimski P.P."/>
            <person name="Smits P.H.M."/>
            <person name="Souciet J.-L."/>
            <person name="Steensma H.Y."/>
            <person name="Stucka R."/>
            <person name="Urrestarazu L.A."/>
            <person name="van der Aart Q.J.M."/>
            <person name="Van Dyck L."/>
            <person name="Vassarotti A."/>
            <person name="Vetter I."/>
            <person name="Vierendeels F."/>
            <person name="Vissers S."/>
            <person name="Wagner G."/>
            <person name="de Wergifosse P."/>
            <person name="Wolfe K.H."/>
            <person name="Zagulski M."/>
            <person name="Zimmermann F.K."/>
            <person name="Mewes H.-W."/>
            <person name="Kleine K."/>
        </authorList>
    </citation>
    <scope>NUCLEOTIDE SEQUENCE [LARGE SCALE GENOMIC DNA]</scope>
    <source>
        <strain>ATCC 204508 / S288c</strain>
    </source>
</reference>
<reference key="4">
    <citation type="journal article" date="2014" name="G3 (Bethesda)">
        <title>The reference genome sequence of Saccharomyces cerevisiae: Then and now.</title>
        <authorList>
            <person name="Engel S.R."/>
            <person name="Dietrich F.S."/>
            <person name="Fisk D.G."/>
            <person name="Binkley G."/>
            <person name="Balakrishnan R."/>
            <person name="Costanzo M.C."/>
            <person name="Dwight S.S."/>
            <person name="Hitz B.C."/>
            <person name="Karra K."/>
            <person name="Nash R.S."/>
            <person name="Weng S."/>
            <person name="Wong E.D."/>
            <person name="Lloyd P."/>
            <person name="Skrzypek M.S."/>
            <person name="Miyasato S.R."/>
            <person name="Simison M."/>
            <person name="Cherry J.M."/>
        </authorList>
    </citation>
    <scope>GENOME REANNOTATION</scope>
    <source>
        <strain>ATCC 204508 / S288c</strain>
    </source>
</reference>
<reference key="5">
    <citation type="journal article" date="2003" name="Nature">
        <title>Global analysis of protein expression in yeast.</title>
        <authorList>
            <person name="Ghaemmaghami S."/>
            <person name="Huh W.-K."/>
            <person name="Bower K."/>
            <person name="Howson R.W."/>
            <person name="Belle A."/>
            <person name="Dephoure N."/>
            <person name="O'Shea E.K."/>
            <person name="Weissman J.S."/>
        </authorList>
    </citation>
    <scope>LEVEL OF PROTEIN EXPRESSION [LARGE SCALE ANALYSIS]</scope>
</reference>
<name>TKT2_YEAST</name>
<comment type="function">
    <text evidence="1">Catalyzes the transfer of a two-carbon ketol group from a ketose donor to an aldose acceptor, via a covalent intermediate with the cofactor thiamine pyrophosphate.</text>
</comment>
<comment type="catalytic activity">
    <reaction>
        <text>D-sedoheptulose 7-phosphate + D-glyceraldehyde 3-phosphate = aldehydo-D-ribose 5-phosphate + D-xylulose 5-phosphate</text>
        <dbReference type="Rhea" id="RHEA:10508"/>
        <dbReference type="ChEBI" id="CHEBI:57483"/>
        <dbReference type="ChEBI" id="CHEBI:57737"/>
        <dbReference type="ChEBI" id="CHEBI:58273"/>
        <dbReference type="ChEBI" id="CHEBI:59776"/>
        <dbReference type="EC" id="2.2.1.1"/>
    </reaction>
</comment>
<comment type="cofactor">
    <cofactor evidence="1">
        <name>Mg(2+)</name>
        <dbReference type="ChEBI" id="CHEBI:18420"/>
    </cofactor>
    <cofactor evidence="1">
        <name>Ca(2+)</name>
        <dbReference type="ChEBI" id="CHEBI:29108"/>
    </cofactor>
    <cofactor evidence="1">
        <name>Mn(2+)</name>
        <dbReference type="ChEBI" id="CHEBI:29035"/>
    </cofactor>
    <cofactor evidence="1">
        <name>Co(2+)</name>
        <dbReference type="ChEBI" id="CHEBI:48828"/>
    </cofactor>
    <text evidence="1">Binds 1 Mg(2+) ion per subunit. Can also utilize other divalent metal cations, such as Ca(2+), Mn(2+) and Co(2+).</text>
</comment>
<comment type="cofactor">
    <cofactor evidence="1">
        <name>thiamine diphosphate</name>
        <dbReference type="ChEBI" id="CHEBI:58937"/>
    </cofactor>
    <text evidence="1">Binds 1 thiamine pyrophosphate per subunit.</text>
</comment>
<comment type="subunit">
    <text evidence="1">Homodimer.</text>
</comment>
<comment type="interaction">
    <interactant intactId="EBI-19297">
        <id>P33315</id>
    </interactant>
    <interactant intactId="EBI-19291">
        <id>P23254</id>
        <label>TKL1</label>
    </interactant>
    <organismsDiffer>false</organismsDiffer>
    <experiments>4</experiments>
</comment>
<comment type="miscellaneous">
    <text evidence="2">Present with 149 molecules/cell in log phase SD medium.</text>
</comment>
<comment type="similarity">
    <text evidence="3">Belongs to the transketolase family.</text>
</comment>
<feature type="chain" id="PRO_0000191905" description="Transketolase 2">
    <location>
        <begin position="1"/>
        <end position="681"/>
    </location>
</feature>
<feature type="active site" description="Proton donor" evidence="1">
    <location>
        <position position="418"/>
    </location>
</feature>
<feature type="binding site" evidence="1">
    <location>
        <position position="30"/>
    </location>
    <ligand>
        <name>substrate</name>
    </ligand>
</feature>
<feature type="binding site" evidence="1">
    <location>
        <position position="69"/>
    </location>
    <ligand>
        <name>thiamine diphosphate</name>
        <dbReference type="ChEBI" id="CHEBI:58937"/>
    </ligand>
</feature>
<feature type="binding site" evidence="1">
    <location>
        <begin position="116"/>
        <end position="118"/>
    </location>
    <ligand>
        <name>thiamine diphosphate</name>
        <dbReference type="ChEBI" id="CHEBI:58937"/>
    </ligand>
</feature>
<feature type="binding site" evidence="1">
    <location>
        <position position="157"/>
    </location>
    <ligand>
        <name>Mg(2+)</name>
        <dbReference type="ChEBI" id="CHEBI:18420"/>
    </ligand>
</feature>
<feature type="binding site" evidence="1">
    <location>
        <position position="158"/>
    </location>
    <ligand>
        <name>thiamine diphosphate</name>
        <dbReference type="ChEBI" id="CHEBI:58937"/>
    </ligand>
</feature>
<feature type="binding site" evidence="1">
    <location>
        <position position="187"/>
    </location>
    <ligand>
        <name>Mg(2+)</name>
        <dbReference type="ChEBI" id="CHEBI:18420"/>
    </ligand>
</feature>
<feature type="binding site" evidence="1">
    <location>
        <position position="187"/>
    </location>
    <ligand>
        <name>thiamine diphosphate</name>
        <dbReference type="ChEBI" id="CHEBI:58937"/>
    </ligand>
</feature>
<feature type="binding site" evidence="1">
    <location>
        <position position="189"/>
    </location>
    <ligand>
        <name>Mg(2+)</name>
        <dbReference type="ChEBI" id="CHEBI:18420"/>
    </ligand>
</feature>
<feature type="binding site" evidence="1">
    <location>
        <position position="263"/>
    </location>
    <ligand>
        <name>substrate</name>
    </ligand>
</feature>
<feature type="binding site" evidence="1">
    <location>
        <position position="263"/>
    </location>
    <ligand>
        <name>thiamine diphosphate</name>
        <dbReference type="ChEBI" id="CHEBI:58937"/>
    </ligand>
</feature>
<feature type="binding site" evidence="1">
    <location>
        <position position="359"/>
    </location>
    <ligand>
        <name>substrate</name>
    </ligand>
</feature>
<feature type="binding site" evidence="1">
    <location>
        <position position="386"/>
    </location>
    <ligand>
        <name>substrate</name>
    </ligand>
</feature>
<feature type="binding site" evidence="1">
    <location>
        <position position="418"/>
    </location>
    <ligand>
        <name>thiamine diphosphate</name>
        <dbReference type="ChEBI" id="CHEBI:58937"/>
    </ligand>
</feature>
<feature type="binding site" evidence="1">
    <location>
        <position position="445"/>
    </location>
    <ligand>
        <name>thiamine diphosphate</name>
        <dbReference type="ChEBI" id="CHEBI:58937"/>
    </ligand>
</feature>
<feature type="binding site" evidence="1">
    <location>
        <position position="469"/>
    </location>
    <ligand>
        <name>substrate</name>
    </ligand>
</feature>
<feature type="binding site" evidence="1">
    <location>
        <position position="477"/>
    </location>
    <ligand>
        <name>substrate</name>
    </ligand>
</feature>
<feature type="binding site" evidence="1">
    <location>
        <position position="528"/>
    </location>
    <ligand>
        <name>substrate</name>
    </ligand>
</feature>
<feature type="site" description="Important for catalytic activity" evidence="1">
    <location>
        <position position="30"/>
    </location>
</feature>
<feature type="site" description="Important for catalytic activity" evidence="1">
    <location>
        <position position="263"/>
    </location>
</feature>
<organism>
    <name type="scientific">Saccharomyces cerevisiae (strain ATCC 204508 / S288c)</name>
    <name type="common">Baker's yeast</name>
    <dbReference type="NCBI Taxonomy" id="559292"/>
    <lineage>
        <taxon>Eukaryota</taxon>
        <taxon>Fungi</taxon>
        <taxon>Dikarya</taxon>
        <taxon>Ascomycota</taxon>
        <taxon>Saccharomycotina</taxon>
        <taxon>Saccharomycetes</taxon>
        <taxon>Saccharomycetales</taxon>
        <taxon>Saccharomycetaceae</taxon>
        <taxon>Saccharomyces</taxon>
    </lineage>
</organism>
<evidence type="ECO:0000250" key="1"/>
<evidence type="ECO:0000269" key="2">
    <source>
    </source>
</evidence>
<evidence type="ECO:0000305" key="3"/>